<proteinExistence type="inferred from homology"/>
<dbReference type="EC" id="3.4.24.-"/>
<dbReference type="EMBL" id="Z80360">
    <property type="protein sequence ID" value="CAB02513.1"/>
    <property type="molecule type" value="Genomic_DNA"/>
</dbReference>
<dbReference type="EMBL" id="AL009126">
    <property type="protein sequence ID" value="CAB15780.1"/>
    <property type="molecule type" value="Genomic_DNA"/>
</dbReference>
<dbReference type="PIR" id="D70057">
    <property type="entry name" value="D70057"/>
</dbReference>
<dbReference type="RefSeq" id="NP_391633.1">
    <property type="nucleotide sequence ID" value="NC_000964.3"/>
</dbReference>
<dbReference type="RefSeq" id="WP_003243167.1">
    <property type="nucleotide sequence ID" value="NZ_OZ025638.1"/>
</dbReference>
<dbReference type="FunCoup" id="P70995">
    <property type="interactions" value="68"/>
</dbReference>
<dbReference type="STRING" id="224308.BSU37530"/>
<dbReference type="MEROPS" id="M50.A05"/>
<dbReference type="PaxDb" id="224308-BSU37530"/>
<dbReference type="EnsemblBacteria" id="CAB15780">
    <property type="protein sequence ID" value="CAB15780"/>
    <property type="gene ID" value="BSU_37530"/>
</dbReference>
<dbReference type="GeneID" id="937099"/>
<dbReference type="KEGG" id="bsu:BSU37530"/>
<dbReference type="PATRIC" id="fig|224308.179.peg.4064"/>
<dbReference type="eggNOG" id="COG1994">
    <property type="taxonomic scope" value="Bacteria"/>
</dbReference>
<dbReference type="InParanoid" id="P70995"/>
<dbReference type="OrthoDB" id="9800627at2"/>
<dbReference type="PhylomeDB" id="P70995"/>
<dbReference type="BioCyc" id="BSUB:BSU37530-MONOMER"/>
<dbReference type="Proteomes" id="UP000001570">
    <property type="component" value="Chromosome"/>
</dbReference>
<dbReference type="GO" id="GO:0005886">
    <property type="term" value="C:plasma membrane"/>
    <property type="evidence" value="ECO:0007669"/>
    <property type="project" value="UniProtKB-SubCell"/>
</dbReference>
<dbReference type="GO" id="GO:0046872">
    <property type="term" value="F:metal ion binding"/>
    <property type="evidence" value="ECO:0007669"/>
    <property type="project" value="UniProtKB-KW"/>
</dbReference>
<dbReference type="GO" id="GO:0008237">
    <property type="term" value="F:metallopeptidase activity"/>
    <property type="evidence" value="ECO:0007669"/>
    <property type="project" value="UniProtKB-KW"/>
</dbReference>
<dbReference type="GO" id="GO:0006508">
    <property type="term" value="P:proteolysis"/>
    <property type="evidence" value="ECO:0007669"/>
    <property type="project" value="UniProtKB-KW"/>
</dbReference>
<dbReference type="CDD" id="cd06158">
    <property type="entry name" value="S2P-M50_like_1"/>
    <property type="match status" value="1"/>
</dbReference>
<dbReference type="InterPro" id="IPR052348">
    <property type="entry name" value="Metallopeptidase_M50B"/>
</dbReference>
<dbReference type="InterPro" id="IPR008915">
    <property type="entry name" value="Peptidase_M50"/>
</dbReference>
<dbReference type="InterPro" id="IPR044537">
    <property type="entry name" value="S2P-M50-like"/>
</dbReference>
<dbReference type="PANTHER" id="PTHR35864">
    <property type="entry name" value="ZINC METALLOPROTEASE MJ0611-RELATED"/>
    <property type="match status" value="1"/>
</dbReference>
<dbReference type="PANTHER" id="PTHR35864:SF1">
    <property type="entry name" value="ZINC METALLOPROTEASE YWHC-RELATED"/>
    <property type="match status" value="1"/>
</dbReference>
<dbReference type="Pfam" id="PF02163">
    <property type="entry name" value="Peptidase_M50"/>
    <property type="match status" value="2"/>
</dbReference>
<comment type="cofactor">
    <cofactor evidence="1">
        <name>Zn(2+)</name>
        <dbReference type="ChEBI" id="CHEBI:29105"/>
    </cofactor>
    <text evidence="1">Binds 1 zinc ion per subunit.</text>
</comment>
<comment type="subcellular location">
    <subcellularLocation>
        <location evidence="3">Cell membrane</location>
        <topology evidence="3">Multi-pass membrane protein</topology>
    </subcellularLocation>
</comment>
<comment type="similarity">
    <text evidence="3">Belongs to the peptidase M50B family.</text>
</comment>
<feature type="chain" id="PRO_0000359940" description="Putative zinc metalloprotease YwhC">
    <location>
        <begin position="1"/>
        <end position="219"/>
    </location>
</feature>
<feature type="transmembrane region" description="Helical" evidence="2">
    <location>
        <begin position="4"/>
        <end position="24"/>
    </location>
</feature>
<feature type="transmembrane region" description="Helical" evidence="2">
    <location>
        <begin position="52"/>
        <end position="72"/>
    </location>
</feature>
<feature type="transmembrane region" description="Helical" evidence="2">
    <location>
        <begin position="94"/>
        <end position="114"/>
    </location>
</feature>
<feature type="transmembrane region" description="Helical" evidence="2">
    <location>
        <begin position="132"/>
        <end position="152"/>
    </location>
</feature>
<feature type="transmembrane region" description="Helical" evidence="2">
    <location>
        <begin position="180"/>
        <end position="200"/>
    </location>
</feature>
<feature type="active site" evidence="1">
    <location>
        <position position="27"/>
    </location>
</feature>
<feature type="binding site" evidence="1">
    <location>
        <position position="26"/>
    </location>
    <ligand>
        <name>Zn(2+)</name>
        <dbReference type="ChEBI" id="CHEBI:29105"/>
        <note>catalytic</note>
    </ligand>
</feature>
<feature type="binding site" evidence="1">
    <location>
        <position position="30"/>
    </location>
    <ligand>
        <name>Zn(2+)</name>
        <dbReference type="ChEBI" id="CHEBI:29105"/>
        <note>catalytic</note>
    </ligand>
</feature>
<gene>
    <name type="primary">ywhC</name>
    <name type="ordered locus">BSU37530</name>
</gene>
<name>YWHC_BACSU</name>
<accession>P70995</accession>
<accession>Q794Y9</accession>
<reference key="1">
    <citation type="journal article" date="1997" name="Microbiology">
        <title>The Bacillus subtilis genome from gerBC (311 degrees) to licR (334 degrees).</title>
        <authorList>
            <person name="Presecan E."/>
            <person name="Moszer I."/>
            <person name="Boursier L."/>
            <person name="Cruz Ramos H."/>
            <person name="De La Fuente V."/>
            <person name="Hullo M.-F."/>
            <person name="Lelong C."/>
            <person name="Schleich S."/>
            <person name="Sekowska A."/>
            <person name="Song B.H."/>
            <person name="Villani G."/>
            <person name="Kunst F."/>
            <person name="Danchin A."/>
            <person name="Glaser P."/>
        </authorList>
    </citation>
    <scope>NUCLEOTIDE SEQUENCE [GENOMIC DNA]</scope>
    <source>
        <strain>168</strain>
    </source>
</reference>
<reference key="2">
    <citation type="journal article" date="1997" name="Nature">
        <title>The complete genome sequence of the Gram-positive bacterium Bacillus subtilis.</title>
        <authorList>
            <person name="Kunst F."/>
            <person name="Ogasawara N."/>
            <person name="Moszer I."/>
            <person name="Albertini A.M."/>
            <person name="Alloni G."/>
            <person name="Azevedo V."/>
            <person name="Bertero M.G."/>
            <person name="Bessieres P."/>
            <person name="Bolotin A."/>
            <person name="Borchert S."/>
            <person name="Borriss R."/>
            <person name="Boursier L."/>
            <person name="Brans A."/>
            <person name="Braun M."/>
            <person name="Brignell S.C."/>
            <person name="Bron S."/>
            <person name="Brouillet S."/>
            <person name="Bruschi C.V."/>
            <person name="Caldwell B."/>
            <person name="Capuano V."/>
            <person name="Carter N.M."/>
            <person name="Choi S.-K."/>
            <person name="Codani J.-J."/>
            <person name="Connerton I.F."/>
            <person name="Cummings N.J."/>
            <person name="Daniel R.A."/>
            <person name="Denizot F."/>
            <person name="Devine K.M."/>
            <person name="Duesterhoeft A."/>
            <person name="Ehrlich S.D."/>
            <person name="Emmerson P.T."/>
            <person name="Entian K.-D."/>
            <person name="Errington J."/>
            <person name="Fabret C."/>
            <person name="Ferrari E."/>
            <person name="Foulger D."/>
            <person name="Fritz C."/>
            <person name="Fujita M."/>
            <person name="Fujita Y."/>
            <person name="Fuma S."/>
            <person name="Galizzi A."/>
            <person name="Galleron N."/>
            <person name="Ghim S.-Y."/>
            <person name="Glaser P."/>
            <person name="Goffeau A."/>
            <person name="Golightly E.J."/>
            <person name="Grandi G."/>
            <person name="Guiseppi G."/>
            <person name="Guy B.J."/>
            <person name="Haga K."/>
            <person name="Haiech J."/>
            <person name="Harwood C.R."/>
            <person name="Henaut A."/>
            <person name="Hilbert H."/>
            <person name="Holsappel S."/>
            <person name="Hosono S."/>
            <person name="Hullo M.-F."/>
            <person name="Itaya M."/>
            <person name="Jones L.-M."/>
            <person name="Joris B."/>
            <person name="Karamata D."/>
            <person name="Kasahara Y."/>
            <person name="Klaerr-Blanchard M."/>
            <person name="Klein C."/>
            <person name="Kobayashi Y."/>
            <person name="Koetter P."/>
            <person name="Koningstein G."/>
            <person name="Krogh S."/>
            <person name="Kumano M."/>
            <person name="Kurita K."/>
            <person name="Lapidus A."/>
            <person name="Lardinois S."/>
            <person name="Lauber J."/>
            <person name="Lazarevic V."/>
            <person name="Lee S.-M."/>
            <person name="Levine A."/>
            <person name="Liu H."/>
            <person name="Masuda S."/>
            <person name="Mauel C."/>
            <person name="Medigue C."/>
            <person name="Medina N."/>
            <person name="Mellado R.P."/>
            <person name="Mizuno M."/>
            <person name="Moestl D."/>
            <person name="Nakai S."/>
            <person name="Noback M."/>
            <person name="Noone D."/>
            <person name="O'Reilly M."/>
            <person name="Ogawa K."/>
            <person name="Ogiwara A."/>
            <person name="Oudega B."/>
            <person name="Park S.-H."/>
            <person name="Parro V."/>
            <person name="Pohl T.M."/>
            <person name="Portetelle D."/>
            <person name="Porwollik S."/>
            <person name="Prescott A.M."/>
            <person name="Presecan E."/>
            <person name="Pujic P."/>
            <person name="Purnelle B."/>
            <person name="Rapoport G."/>
            <person name="Rey M."/>
            <person name="Reynolds S."/>
            <person name="Rieger M."/>
            <person name="Rivolta C."/>
            <person name="Rocha E."/>
            <person name="Roche B."/>
            <person name="Rose M."/>
            <person name="Sadaie Y."/>
            <person name="Sato T."/>
            <person name="Scanlan E."/>
            <person name="Schleich S."/>
            <person name="Schroeter R."/>
            <person name="Scoffone F."/>
            <person name="Sekiguchi J."/>
            <person name="Sekowska A."/>
            <person name="Seror S.J."/>
            <person name="Serror P."/>
            <person name="Shin B.-S."/>
            <person name="Soldo B."/>
            <person name="Sorokin A."/>
            <person name="Tacconi E."/>
            <person name="Takagi T."/>
            <person name="Takahashi H."/>
            <person name="Takemaru K."/>
            <person name="Takeuchi M."/>
            <person name="Tamakoshi A."/>
            <person name="Tanaka T."/>
            <person name="Terpstra P."/>
            <person name="Tognoni A."/>
            <person name="Tosato V."/>
            <person name="Uchiyama S."/>
            <person name="Vandenbol M."/>
            <person name="Vannier F."/>
            <person name="Vassarotti A."/>
            <person name="Viari A."/>
            <person name="Wambutt R."/>
            <person name="Wedler E."/>
            <person name="Wedler H."/>
            <person name="Weitzenegger T."/>
            <person name="Winters P."/>
            <person name="Wipat A."/>
            <person name="Yamamoto H."/>
            <person name="Yamane K."/>
            <person name="Yasumoto K."/>
            <person name="Yata K."/>
            <person name="Yoshida K."/>
            <person name="Yoshikawa H.-F."/>
            <person name="Zumstein E."/>
            <person name="Yoshikawa H."/>
            <person name="Danchin A."/>
        </authorList>
    </citation>
    <scope>NUCLEOTIDE SEQUENCE [LARGE SCALE GENOMIC DNA]</scope>
    <source>
        <strain>168</strain>
    </source>
</reference>
<protein>
    <recommendedName>
        <fullName>Putative zinc metalloprotease YwhC</fullName>
        <ecNumber>3.4.24.-</ecNumber>
    </recommendedName>
</protein>
<keyword id="KW-1003">Cell membrane</keyword>
<keyword id="KW-0378">Hydrolase</keyword>
<keyword id="KW-0472">Membrane</keyword>
<keyword id="KW-0479">Metal-binding</keyword>
<keyword id="KW-0482">Metalloprotease</keyword>
<keyword id="KW-0645">Protease</keyword>
<keyword id="KW-1185">Reference proteome</keyword>
<keyword id="KW-0812">Transmembrane</keyword>
<keyword id="KW-1133">Transmembrane helix</keyword>
<keyword id="KW-0862">Zinc</keyword>
<sequence>MDRFLYYPLSLMPYLVITLIVSFTMHELAHAYVAYKFGDDTAKKQGRLTLNPIKHLDPFGTILILVAGFGWARPIPVNRRFFKKPRLAGVLVSIAGPVSNLILAFIGFFLLVLMHAYGMEMLAAFSTGLDQFFSIWIQLNLVLFLFNLLPLPPLDGYRIIEDLVPPGVRAKMTQAESYGFIVFLVLFVTPLGSYVLWPMLNAGRDSILKLFSAIFQPLL</sequence>
<evidence type="ECO:0000250" key="1"/>
<evidence type="ECO:0000255" key="2"/>
<evidence type="ECO:0000305" key="3"/>
<organism>
    <name type="scientific">Bacillus subtilis (strain 168)</name>
    <dbReference type="NCBI Taxonomy" id="224308"/>
    <lineage>
        <taxon>Bacteria</taxon>
        <taxon>Bacillati</taxon>
        <taxon>Bacillota</taxon>
        <taxon>Bacilli</taxon>
        <taxon>Bacillales</taxon>
        <taxon>Bacillaceae</taxon>
        <taxon>Bacillus</taxon>
    </lineage>
</organism>